<reference key="1">
    <citation type="journal article" date="2001" name="Nature">
        <title>Genome sequence and gene compaction of the eukaryote parasite Encephalitozoon cuniculi.</title>
        <authorList>
            <person name="Katinka M.D."/>
            <person name="Duprat S."/>
            <person name="Cornillot E."/>
            <person name="Metenier G."/>
            <person name="Thomarat F."/>
            <person name="Prensier G."/>
            <person name="Barbe V."/>
            <person name="Peyretaillade E."/>
            <person name="Brottier P."/>
            <person name="Wincker P."/>
            <person name="Delbac F."/>
            <person name="El Alaoui H."/>
            <person name="Peyret P."/>
            <person name="Saurin W."/>
            <person name="Gouy M."/>
            <person name="Weissenbach J."/>
            <person name="Vivares C.P."/>
        </authorList>
    </citation>
    <scope>NUCLEOTIDE SEQUENCE [LARGE SCALE GENOMIC DNA]</scope>
    <source>
        <strain>GB-M1</strain>
    </source>
</reference>
<feature type="chain" id="PRO_0000047825" description="Zinc finger C2H2 protein ECU02_0310">
    <location>
        <begin position="1"/>
        <end position="104"/>
    </location>
</feature>
<feature type="zinc finger region" description="C2H2-type" evidence="2">
    <location>
        <begin position="56"/>
        <end position="80"/>
    </location>
</feature>
<proteinExistence type="inferred from homology"/>
<comment type="function">
    <text evidence="1">Involved in pre-60S ribosomal particles maturation by promoting the nuclear export of the 60S ribosome.</text>
</comment>
<comment type="subunit">
    <text evidence="1">Associates with pre-60S ribosomal particles; released from the pre-60S particle very early in the cytoplasm.</text>
</comment>
<comment type="subcellular location">
    <subcellularLocation>
        <location evidence="1">Nucleus</location>
    </subcellularLocation>
    <subcellularLocation>
        <location evidence="1">Cytoplasm</location>
    </subcellularLocation>
    <text evidence="1">Shuttles between the nucleus and the cytoplasm.</text>
</comment>
<comment type="similarity">
    <text evidence="3">Belongs to the ZNF593/BUD20 C2H2-type zinc-finger protein family.</text>
</comment>
<keyword id="KW-0963">Cytoplasm</keyword>
<keyword id="KW-0479">Metal-binding</keyword>
<keyword id="KW-0539">Nucleus</keyword>
<keyword id="KW-1185">Reference proteome</keyword>
<keyword id="KW-0690">Ribosome biogenesis</keyword>
<keyword id="KW-0862">Zinc</keyword>
<keyword id="KW-0863">Zinc-finger</keyword>
<organism>
    <name type="scientific">Encephalitozoon cuniculi (strain GB-M1)</name>
    <name type="common">Microsporidian parasite</name>
    <dbReference type="NCBI Taxonomy" id="284813"/>
    <lineage>
        <taxon>Eukaryota</taxon>
        <taxon>Fungi</taxon>
        <taxon>Fungi incertae sedis</taxon>
        <taxon>Microsporidia</taxon>
        <taxon>Unikaryonidae</taxon>
        <taxon>Encephalitozoon</taxon>
    </lineage>
</organism>
<evidence type="ECO:0000250" key="1">
    <source>
        <dbReference type="UniProtKB" id="Q08004"/>
    </source>
</evidence>
<evidence type="ECO:0000255" key="2">
    <source>
        <dbReference type="PROSITE-ProRule" id="PRU00042"/>
    </source>
</evidence>
<evidence type="ECO:0000305" key="3"/>
<protein>
    <recommendedName>
        <fullName>Zinc finger C2H2 protein ECU02_0310</fullName>
    </recommendedName>
</protein>
<accession>Q8SWF6</accession>
<gene>
    <name type="ordered locus">ECU02_0310</name>
</gene>
<dbReference type="EMBL" id="AL590442">
    <property type="protein sequence ID" value="CAD25062.1"/>
    <property type="molecule type" value="Genomic_DNA"/>
</dbReference>
<dbReference type="RefSeq" id="NP_584558.1">
    <property type="nucleotide sequence ID" value="NM_001040747.1"/>
</dbReference>
<dbReference type="SMR" id="Q8SWF6"/>
<dbReference type="FunCoup" id="Q8SWF6">
    <property type="interactions" value="103"/>
</dbReference>
<dbReference type="STRING" id="284813.Q8SWF6"/>
<dbReference type="GeneID" id="858548"/>
<dbReference type="KEGG" id="ecu:ECU02_0310"/>
<dbReference type="VEuPathDB" id="MicrosporidiaDB:ECU02_0310"/>
<dbReference type="HOGENOM" id="CLU_117291_4_1_1"/>
<dbReference type="InParanoid" id="Q8SWF6"/>
<dbReference type="OMA" id="MKDHFRS"/>
<dbReference type="OrthoDB" id="24683at2759"/>
<dbReference type="Proteomes" id="UP000000819">
    <property type="component" value="Chromosome II"/>
</dbReference>
<dbReference type="GO" id="GO:0005737">
    <property type="term" value="C:cytoplasm"/>
    <property type="evidence" value="ECO:0007669"/>
    <property type="project" value="UniProtKB-SubCell"/>
</dbReference>
<dbReference type="GO" id="GO:0005634">
    <property type="term" value="C:nucleus"/>
    <property type="evidence" value="ECO:0007669"/>
    <property type="project" value="UniProtKB-SubCell"/>
</dbReference>
<dbReference type="GO" id="GO:0008270">
    <property type="term" value="F:zinc ion binding"/>
    <property type="evidence" value="ECO:0007669"/>
    <property type="project" value="UniProtKB-KW"/>
</dbReference>
<dbReference type="GO" id="GO:0042254">
    <property type="term" value="P:ribosome biogenesis"/>
    <property type="evidence" value="ECO:0007669"/>
    <property type="project" value="UniProtKB-KW"/>
</dbReference>
<dbReference type="Gene3D" id="3.30.160.60">
    <property type="entry name" value="Classic Zinc Finger"/>
    <property type="match status" value="1"/>
</dbReference>
<dbReference type="InterPro" id="IPR051879">
    <property type="entry name" value="C2H2-ZF_Maturation_Protein"/>
</dbReference>
<dbReference type="InterPro" id="IPR022755">
    <property type="entry name" value="Znf_C2H2_jaz"/>
</dbReference>
<dbReference type="InterPro" id="IPR036236">
    <property type="entry name" value="Znf_C2H2_sf"/>
</dbReference>
<dbReference type="InterPro" id="IPR013087">
    <property type="entry name" value="Znf_C2H2_type"/>
</dbReference>
<dbReference type="PANTHER" id="PTHR46095">
    <property type="entry name" value="ZINC FINGER PROTEIN 593"/>
    <property type="match status" value="1"/>
</dbReference>
<dbReference type="PANTHER" id="PTHR46095:SF1">
    <property type="entry name" value="ZINC FINGER PROTEIN 593"/>
    <property type="match status" value="1"/>
</dbReference>
<dbReference type="Pfam" id="PF12171">
    <property type="entry name" value="zf-C2H2_jaz"/>
    <property type="match status" value="1"/>
</dbReference>
<dbReference type="SUPFAM" id="SSF57667">
    <property type="entry name" value="beta-beta-alpha zinc fingers"/>
    <property type="match status" value="1"/>
</dbReference>
<dbReference type="PROSITE" id="PS00028">
    <property type="entry name" value="ZINC_FINGER_C2H2_1"/>
    <property type="match status" value="1"/>
</dbReference>
<dbReference type="PROSITE" id="PS50157">
    <property type="entry name" value="ZINC_FINGER_C2H2_2"/>
    <property type="match status" value="1"/>
</dbReference>
<name>BUD20_ENCCU</name>
<sequence length="104" mass="12370">MPKSDTKQKKRRSNKNRLRIKRARLFGPKDIDQVKEDIESQKKIEYDPELPGGGHFYCCECDRHFITEKVLMEHKRSNPHRRRAKEVREVAHSQRDAEWAVGLT</sequence>